<reference key="1">
    <citation type="journal article" date="2010" name="BMC Genomics">
        <title>A genomic perspective on the potential of Actinobacillus succinogenes for industrial succinate production.</title>
        <authorList>
            <person name="McKinlay J.B."/>
            <person name="Laivenieks M."/>
            <person name="Schindler B.D."/>
            <person name="McKinlay A.A."/>
            <person name="Siddaramappa S."/>
            <person name="Challacombe J.F."/>
            <person name="Lowry S.R."/>
            <person name="Clum A."/>
            <person name="Lapidus A.L."/>
            <person name="Burkhart K.B."/>
            <person name="Harkins V."/>
            <person name="Vieille C."/>
        </authorList>
    </citation>
    <scope>NUCLEOTIDE SEQUENCE [LARGE SCALE GENOMIC DNA]</scope>
    <source>
        <strain>ATCC 55618 / DSM 22257 / CCUG 43843 / 130Z</strain>
    </source>
</reference>
<name>ILVD_ACTSZ</name>
<evidence type="ECO:0000255" key="1">
    <source>
        <dbReference type="HAMAP-Rule" id="MF_00012"/>
    </source>
</evidence>
<gene>
    <name evidence="1" type="primary">ilvD</name>
    <name type="ordered locus">Asuc_0415</name>
</gene>
<keyword id="KW-0001">2Fe-2S</keyword>
<keyword id="KW-0028">Amino-acid biosynthesis</keyword>
<keyword id="KW-0100">Branched-chain amino acid biosynthesis</keyword>
<keyword id="KW-0408">Iron</keyword>
<keyword id="KW-0411">Iron-sulfur</keyword>
<keyword id="KW-0456">Lyase</keyword>
<keyword id="KW-0460">Magnesium</keyword>
<keyword id="KW-0479">Metal-binding</keyword>
<keyword id="KW-1185">Reference proteome</keyword>
<feature type="chain" id="PRO_1000070948" description="Dihydroxy-acid dehydratase">
    <location>
        <begin position="1"/>
        <end position="614"/>
    </location>
</feature>
<feature type="active site" description="Proton acceptor" evidence="1">
    <location>
        <position position="517"/>
    </location>
</feature>
<feature type="binding site" evidence="1">
    <location>
        <position position="81"/>
    </location>
    <ligand>
        <name>Mg(2+)</name>
        <dbReference type="ChEBI" id="CHEBI:18420"/>
    </ligand>
</feature>
<feature type="binding site" evidence="1">
    <location>
        <position position="122"/>
    </location>
    <ligand>
        <name>[2Fe-2S] cluster</name>
        <dbReference type="ChEBI" id="CHEBI:190135"/>
    </ligand>
</feature>
<feature type="binding site" evidence="1">
    <location>
        <position position="123"/>
    </location>
    <ligand>
        <name>Mg(2+)</name>
        <dbReference type="ChEBI" id="CHEBI:18420"/>
    </ligand>
</feature>
<feature type="binding site" description="via carbamate group" evidence="1">
    <location>
        <position position="124"/>
    </location>
    <ligand>
        <name>Mg(2+)</name>
        <dbReference type="ChEBI" id="CHEBI:18420"/>
    </ligand>
</feature>
<feature type="binding site" evidence="1">
    <location>
        <position position="195"/>
    </location>
    <ligand>
        <name>[2Fe-2S] cluster</name>
        <dbReference type="ChEBI" id="CHEBI:190135"/>
    </ligand>
</feature>
<feature type="binding site" evidence="1">
    <location>
        <position position="491"/>
    </location>
    <ligand>
        <name>Mg(2+)</name>
        <dbReference type="ChEBI" id="CHEBI:18420"/>
    </ligand>
</feature>
<feature type="modified residue" description="N6-carboxylysine" evidence="1">
    <location>
        <position position="124"/>
    </location>
</feature>
<dbReference type="EC" id="4.2.1.9" evidence="1"/>
<dbReference type="EMBL" id="CP000746">
    <property type="protein sequence ID" value="ABR73793.1"/>
    <property type="molecule type" value="Genomic_DNA"/>
</dbReference>
<dbReference type="RefSeq" id="WP_012072178.1">
    <property type="nucleotide sequence ID" value="NC_009655.1"/>
</dbReference>
<dbReference type="SMR" id="A6VLE6"/>
<dbReference type="STRING" id="339671.Asuc_0415"/>
<dbReference type="KEGG" id="asu:Asuc_0415"/>
<dbReference type="eggNOG" id="COG0129">
    <property type="taxonomic scope" value="Bacteria"/>
</dbReference>
<dbReference type="HOGENOM" id="CLU_014271_4_2_6"/>
<dbReference type="OrthoDB" id="9807077at2"/>
<dbReference type="UniPathway" id="UPA00047">
    <property type="reaction ID" value="UER00057"/>
</dbReference>
<dbReference type="UniPathway" id="UPA00049">
    <property type="reaction ID" value="UER00061"/>
</dbReference>
<dbReference type="Proteomes" id="UP000001114">
    <property type="component" value="Chromosome"/>
</dbReference>
<dbReference type="GO" id="GO:0005829">
    <property type="term" value="C:cytosol"/>
    <property type="evidence" value="ECO:0007669"/>
    <property type="project" value="TreeGrafter"/>
</dbReference>
<dbReference type="GO" id="GO:0051537">
    <property type="term" value="F:2 iron, 2 sulfur cluster binding"/>
    <property type="evidence" value="ECO:0007669"/>
    <property type="project" value="UniProtKB-UniRule"/>
</dbReference>
<dbReference type="GO" id="GO:0004160">
    <property type="term" value="F:dihydroxy-acid dehydratase activity"/>
    <property type="evidence" value="ECO:0007669"/>
    <property type="project" value="UniProtKB-UniRule"/>
</dbReference>
<dbReference type="GO" id="GO:0000287">
    <property type="term" value="F:magnesium ion binding"/>
    <property type="evidence" value="ECO:0007669"/>
    <property type="project" value="UniProtKB-UniRule"/>
</dbReference>
<dbReference type="GO" id="GO:0009097">
    <property type="term" value="P:isoleucine biosynthetic process"/>
    <property type="evidence" value="ECO:0007669"/>
    <property type="project" value="UniProtKB-UniRule"/>
</dbReference>
<dbReference type="GO" id="GO:0009099">
    <property type="term" value="P:L-valine biosynthetic process"/>
    <property type="evidence" value="ECO:0007669"/>
    <property type="project" value="UniProtKB-UniRule"/>
</dbReference>
<dbReference type="FunFam" id="3.50.30.80:FF:000001">
    <property type="entry name" value="Dihydroxy-acid dehydratase"/>
    <property type="match status" value="1"/>
</dbReference>
<dbReference type="Gene3D" id="3.50.30.80">
    <property type="entry name" value="IlvD/EDD C-terminal domain-like"/>
    <property type="match status" value="1"/>
</dbReference>
<dbReference type="HAMAP" id="MF_00012">
    <property type="entry name" value="IlvD"/>
    <property type="match status" value="1"/>
</dbReference>
<dbReference type="InterPro" id="IPR042096">
    <property type="entry name" value="Dihydro-acid_dehy_C"/>
</dbReference>
<dbReference type="InterPro" id="IPR004404">
    <property type="entry name" value="DihydroxyA_deHydtase"/>
</dbReference>
<dbReference type="InterPro" id="IPR020558">
    <property type="entry name" value="DiOHA_6PGluconate_deHydtase_CS"/>
</dbReference>
<dbReference type="InterPro" id="IPR056740">
    <property type="entry name" value="ILV_EDD_C"/>
</dbReference>
<dbReference type="InterPro" id="IPR000581">
    <property type="entry name" value="ILV_EDD_N"/>
</dbReference>
<dbReference type="InterPro" id="IPR037237">
    <property type="entry name" value="IlvD/EDD_N"/>
</dbReference>
<dbReference type="NCBIfam" id="TIGR00110">
    <property type="entry name" value="ilvD"/>
    <property type="match status" value="1"/>
</dbReference>
<dbReference type="NCBIfam" id="NF009103">
    <property type="entry name" value="PRK12448.1"/>
    <property type="match status" value="1"/>
</dbReference>
<dbReference type="PANTHER" id="PTHR43661">
    <property type="entry name" value="D-XYLONATE DEHYDRATASE"/>
    <property type="match status" value="1"/>
</dbReference>
<dbReference type="PANTHER" id="PTHR43661:SF3">
    <property type="entry name" value="D-XYLONATE DEHYDRATASE YAGF-RELATED"/>
    <property type="match status" value="1"/>
</dbReference>
<dbReference type="Pfam" id="PF24877">
    <property type="entry name" value="ILV_EDD_C"/>
    <property type="match status" value="1"/>
</dbReference>
<dbReference type="Pfam" id="PF00920">
    <property type="entry name" value="ILVD_EDD_N"/>
    <property type="match status" value="1"/>
</dbReference>
<dbReference type="SUPFAM" id="SSF143975">
    <property type="entry name" value="IlvD/EDD N-terminal domain-like"/>
    <property type="match status" value="1"/>
</dbReference>
<dbReference type="SUPFAM" id="SSF52016">
    <property type="entry name" value="LeuD/IlvD-like"/>
    <property type="match status" value="1"/>
</dbReference>
<dbReference type="PROSITE" id="PS00886">
    <property type="entry name" value="ILVD_EDD_1"/>
    <property type="match status" value="1"/>
</dbReference>
<dbReference type="PROSITE" id="PS00887">
    <property type="entry name" value="ILVD_EDD_2"/>
    <property type="match status" value="1"/>
</dbReference>
<comment type="function">
    <text evidence="1">Functions in the biosynthesis of branched-chain amino acids. Catalyzes the dehydration of (2R,3R)-2,3-dihydroxy-3-methylpentanoate (2,3-dihydroxy-3-methylvalerate) into 2-oxo-3-methylpentanoate (2-oxo-3-methylvalerate) and of (2R)-2,3-dihydroxy-3-methylbutanoate (2,3-dihydroxyisovalerate) into 2-oxo-3-methylbutanoate (2-oxoisovalerate), the penultimate precursor to L-isoleucine and L-valine, respectively.</text>
</comment>
<comment type="catalytic activity">
    <reaction evidence="1">
        <text>(2R)-2,3-dihydroxy-3-methylbutanoate = 3-methyl-2-oxobutanoate + H2O</text>
        <dbReference type="Rhea" id="RHEA:24809"/>
        <dbReference type="ChEBI" id="CHEBI:11851"/>
        <dbReference type="ChEBI" id="CHEBI:15377"/>
        <dbReference type="ChEBI" id="CHEBI:49072"/>
        <dbReference type="EC" id="4.2.1.9"/>
    </reaction>
    <physiologicalReaction direction="left-to-right" evidence="1">
        <dbReference type="Rhea" id="RHEA:24810"/>
    </physiologicalReaction>
</comment>
<comment type="catalytic activity">
    <reaction evidence="1">
        <text>(2R,3R)-2,3-dihydroxy-3-methylpentanoate = (S)-3-methyl-2-oxopentanoate + H2O</text>
        <dbReference type="Rhea" id="RHEA:27694"/>
        <dbReference type="ChEBI" id="CHEBI:15377"/>
        <dbReference type="ChEBI" id="CHEBI:35146"/>
        <dbReference type="ChEBI" id="CHEBI:49258"/>
        <dbReference type="EC" id="4.2.1.9"/>
    </reaction>
    <physiologicalReaction direction="left-to-right" evidence="1">
        <dbReference type="Rhea" id="RHEA:27695"/>
    </physiologicalReaction>
</comment>
<comment type="cofactor">
    <cofactor evidence="1">
        <name>[2Fe-2S] cluster</name>
        <dbReference type="ChEBI" id="CHEBI:190135"/>
    </cofactor>
    <text evidence="1">Binds 1 [2Fe-2S] cluster per subunit. This cluster acts as a Lewis acid cofactor.</text>
</comment>
<comment type="cofactor">
    <cofactor evidence="1">
        <name>Mg(2+)</name>
        <dbReference type="ChEBI" id="CHEBI:18420"/>
    </cofactor>
</comment>
<comment type="pathway">
    <text evidence="1">Amino-acid biosynthesis; L-isoleucine biosynthesis; L-isoleucine from 2-oxobutanoate: step 3/4.</text>
</comment>
<comment type="pathway">
    <text evidence="1">Amino-acid biosynthesis; L-valine biosynthesis; L-valine from pyruvate: step 3/4.</text>
</comment>
<comment type="subunit">
    <text evidence="1">Homodimer.</text>
</comment>
<comment type="similarity">
    <text evidence="1">Belongs to the IlvD/Edd family.</text>
</comment>
<accession>A6VLE6</accession>
<protein>
    <recommendedName>
        <fullName evidence="1">Dihydroxy-acid dehydratase</fullName>
        <shortName evidence="1">DAD</shortName>
        <ecNumber evidence="1">4.2.1.9</ecNumber>
    </recommendedName>
</protein>
<sequence length="614" mass="65954">MPVLRSATSTQGRNMAGARALWRATGMKENDFGKPIIAVVNSFTQFVPGHVHLKDMGQLVAREIEKAGGVAKEFNTIAVDDGIAMGHGGMLYSLPSRDLIADSVEYMVNAHCADAMVCISNCDKITPGMLMAAMRLNIPTIFVSGGPMEAGKTKLSDKLIKLDLIDAMIQSADANVSDADVDVIEKSACPTCGACSGMFTANSMNCLTEALGLSLPGNGSMLATHADRKELFLEAGRKIVEICKRHYEQDDYSVLPRSIATFEAFENAMSLDIAMGGSSNTVLHLLAVAQEAGVDFKMADIDRLSRVVPCLSKIAPNTNKYHMEDVHRAGGIMGIVGELDRAGLIHRKVKTILGLTMEEQLNQYDIIRNKDEKLNKFFRAGPAGIRTTEAFSQDCRWDTVDDDRANGCIRDRAHAVTEEGGLAVLFGNIAEDGCIVKTAGVDESIWKFTGKAIVFESQEDAVAGILGGKVKEGHVVVIRYEGPKGGPGMQEMLYPTSYLKSMGLGKKCALLTDGRFSGGTSGLSIGHASPEAASGGAIGLVNNDDIIEIDIPNRAINLVLPDEELAVRRAAMEAKGARAWQPENRRREVSTALKIFGHFATSADKGAVRDKTKL</sequence>
<proteinExistence type="inferred from homology"/>
<organism>
    <name type="scientific">Actinobacillus succinogenes (strain ATCC 55618 / DSM 22257 / CCUG 43843 / 130Z)</name>
    <dbReference type="NCBI Taxonomy" id="339671"/>
    <lineage>
        <taxon>Bacteria</taxon>
        <taxon>Pseudomonadati</taxon>
        <taxon>Pseudomonadota</taxon>
        <taxon>Gammaproteobacteria</taxon>
        <taxon>Pasteurellales</taxon>
        <taxon>Pasteurellaceae</taxon>
        <taxon>Actinobacillus</taxon>
    </lineage>
</organism>